<protein>
    <recommendedName>
        <fullName evidence="1">NADH-quinone oxidoreductase subunit A</fullName>
        <ecNumber evidence="1">7.1.1.-</ecNumber>
    </recommendedName>
    <alternativeName>
        <fullName evidence="1">NADH dehydrogenase I subunit A</fullName>
    </alternativeName>
    <alternativeName>
        <fullName evidence="1">NDH-1 subunit A</fullName>
    </alternativeName>
    <alternativeName>
        <fullName evidence="1">NUO1</fullName>
    </alternativeName>
</protein>
<organism>
    <name type="scientific">Acinetobacter baumannii (strain ACICU)</name>
    <dbReference type="NCBI Taxonomy" id="405416"/>
    <lineage>
        <taxon>Bacteria</taxon>
        <taxon>Pseudomonadati</taxon>
        <taxon>Pseudomonadota</taxon>
        <taxon>Gammaproteobacteria</taxon>
        <taxon>Moraxellales</taxon>
        <taxon>Moraxellaceae</taxon>
        <taxon>Acinetobacter</taxon>
        <taxon>Acinetobacter calcoaceticus/baumannii complex</taxon>
    </lineage>
</organism>
<comment type="function">
    <text evidence="1">NDH-1 shuttles electrons from NADH, via FMN and iron-sulfur (Fe-S) centers, to quinones in the respiratory chain. The immediate electron acceptor for the enzyme in this species is believed to be ubiquinone. Couples the redox reaction to proton translocation (for every two electrons transferred, four hydrogen ions are translocated across the cytoplasmic membrane), and thus conserves the redox energy in a proton gradient.</text>
</comment>
<comment type="catalytic activity">
    <reaction evidence="1">
        <text>a quinone + NADH + 5 H(+)(in) = a quinol + NAD(+) + 4 H(+)(out)</text>
        <dbReference type="Rhea" id="RHEA:57888"/>
        <dbReference type="ChEBI" id="CHEBI:15378"/>
        <dbReference type="ChEBI" id="CHEBI:24646"/>
        <dbReference type="ChEBI" id="CHEBI:57540"/>
        <dbReference type="ChEBI" id="CHEBI:57945"/>
        <dbReference type="ChEBI" id="CHEBI:132124"/>
    </reaction>
</comment>
<comment type="subunit">
    <text evidence="1">NDH-1 is composed of 14 different subunits. Subunits NuoA, H, J, K, L, M, N constitute the membrane sector of the complex.</text>
</comment>
<comment type="subcellular location">
    <subcellularLocation>
        <location evidence="1">Cell inner membrane</location>
        <topology evidence="1">Multi-pass membrane protein</topology>
    </subcellularLocation>
</comment>
<comment type="similarity">
    <text evidence="1">Belongs to the complex I subunit 3 family.</text>
</comment>
<feature type="chain" id="PRO_0000362612" description="NADH-quinone oxidoreductase subunit A">
    <location>
        <begin position="1"/>
        <end position="183"/>
    </location>
</feature>
<feature type="transmembrane region" description="Helical" evidence="1">
    <location>
        <begin position="11"/>
        <end position="31"/>
    </location>
</feature>
<feature type="transmembrane region" description="Helical" evidence="1">
    <location>
        <begin position="63"/>
        <end position="83"/>
    </location>
</feature>
<feature type="transmembrane region" description="Helical" evidence="1">
    <location>
        <begin position="98"/>
        <end position="118"/>
    </location>
</feature>
<feature type="region of interest" description="Disordered" evidence="2">
    <location>
        <begin position="159"/>
        <end position="183"/>
    </location>
</feature>
<keyword id="KW-0997">Cell inner membrane</keyword>
<keyword id="KW-1003">Cell membrane</keyword>
<keyword id="KW-0472">Membrane</keyword>
<keyword id="KW-0520">NAD</keyword>
<keyword id="KW-0874">Quinone</keyword>
<keyword id="KW-1278">Translocase</keyword>
<keyword id="KW-0812">Transmembrane</keyword>
<keyword id="KW-1133">Transmembrane helix</keyword>
<keyword id="KW-0813">Transport</keyword>
<keyword id="KW-0830">Ubiquinone</keyword>
<proteinExistence type="inferred from homology"/>
<reference key="1">
    <citation type="journal article" date="2008" name="Antimicrob. Agents Chemother.">
        <title>Whole-genome pyrosequencing of an epidemic multidrug-resistant Acinetobacter baumannii strain belonging to the European clone II group.</title>
        <authorList>
            <person name="Iacono M."/>
            <person name="Villa L."/>
            <person name="Fortini D."/>
            <person name="Bordoni R."/>
            <person name="Imperi F."/>
            <person name="Bonnal R.J."/>
            <person name="Sicheritz-Ponten T."/>
            <person name="De Bellis G."/>
            <person name="Visca P."/>
            <person name="Cassone A."/>
            <person name="Carattoli A."/>
        </authorList>
    </citation>
    <scope>NUCLEOTIDE SEQUENCE [LARGE SCALE GENOMIC DNA]</scope>
    <source>
        <strain>ACICU</strain>
    </source>
</reference>
<gene>
    <name evidence="1" type="primary">nuoA</name>
    <name type="ordered locus">ACICU_00709</name>
</gene>
<accession>B2HU41</accession>
<sequence>MSAITPYDWAIIAFVIGVTFLCVFMLTVPLLLGGKSWGRAKQEQFESGVVSAGGARIRLSAKFYLVAIFFVVFDLEALYLYAWSTSVREVGWLGYTTVVIFVVDLLIALVYAFSVGALSWAPADRRKLAGEKIKVGSPTMNIAEITRFNSIEELVTDPTGQIPAQSSGRVKSKTTPALSSEKE</sequence>
<evidence type="ECO:0000255" key="1">
    <source>
        <dbReference type="HAMAP-Rule" id="MF_01394"/>
    </source>
</evidence>
<evidence type="ECO:0000256" key="2">
    <source>
        <dbReference type="SAM" id="MobiDB-lite"/>
    </source>
</evidence>
<dbReference type="EC" id="7.1.1.-" evidence="1"/>
<dbReference type="EMBL" id="CP000863">
    <property type="protein sequence ID" value="ACC56021.1"/>
    <property type="molecule type" value="Genomic_DNA"/>
</dbReference>
<dbReference type="SMR" id="B2HU41"/>
<dbReference type="KEGG" id="abc:ACICU_00709"/>
<dbReference type="HOGENOM" id="CLU_1486001_0_0_6"/>
<dbReference type="Proteomes" id="UP000008839">
    <property type="component" value="Chromosome"/>
</dbReference>
<dbReference type="GO" id="GO:0030964">
    <property type="term" value="C:NADH dehydrogenase complex"/>
    <property type="evidence" value="ECO:0007669"/>
    <property type="project" value="TreeGrafter"/>
</dbReference>
<dbReference type="GO" id="GO:0005886">
    <property type="term" value="C:plasma membrane"/>
    <property type="evidence" value="ECO:0007669"/>
    <property type="project" value="UniProtKB-SubCell"/>
</dbReference>
<dbReference type="GO" id="GO:0008137">
    <property type="term" value="F:NADH dehydrogenase (ubiquinone) activity"/>
    <property type="evidence" value="ECO:0007669"/>
    <property type="project" value="InterPro"/>
</dbReference>
<dbReference type="GO" id="GO:0050136">
    <property type="term" value="F:NADH:ubiquinone reductase (non-electrogenic) activity"/>
    <property type="evidence" value="ECO:0007669"/>
    <property type="project" value="UniProtKB-UniRule"/>
</dbReference>
<dbReference type="GO" id="GO:0048038">
    <property type="term" value="F:quinone binding"/>
    <property type="evidence" value="ECO:0007669"/>
    <property type="project" value="UniProtKB-KW"/>
</dbReference>
<dbReference type="Gene3D" id="1.20.58.1610">
    <property type="entry name" value="NADH:ubiquinone/plastoquinone oxidoreductase, chain 3"/>
    <property type="match status" value="1"/>
</dbReference>
<dbReference type="HAMAP" id="MF_01394">
    <property type="entry name" value="NDH1_NuoA"/>
    <property type="match status" value="1"/>
</dbReference>
<dbReference type="InterPro" id="IPR023043">
    <property type="entry name" value="NAD(P)H_OxRDtase_bac/plastid"/>
</dbReference>
<dbReference type="InterPro" id="IPR000440">
    <property type="entry name" value="NADH_UbQ/plastoQ_OxRdtase_su3"/>
</dbReference>
<dbReference type="InterPro" id="IPR038430">
    <property type="entry name" value="NDAH_ubi_oxred_su3_sf"/>
</dbReference>
<dbReference type="PANTHER" id="PTHR11058:SF21">
    <property type="entry name" value="NADH-QUINONE OXIDOREDUCTASE SUBUNIT A"/>
    <property type="match status" value="1"/>
</dbReference>
<dbReference type="PANTHER" id="PTHR11058">
    <property type="entry name" value="NADH-UBIQUINONE OXIDOREDUCTASE CHAIN 3"/>
    <property type="match status" value="1"/>
</dbReference>
<dbReference type="Pfam" id="PF00507">
    <property type="entry name" value="Oxidored_q4"/>
    <property type="match status" value="1"/>
</dbReference>
<name>NUOA_ACIBC</name>